<dbReference type="EC" id="7.1.2.1"/>
<dbReference type="EMBL" id="AL138640">
    <property type="protein sequence ID" value="CAB86447.1"/>
    <property type="molecule type" value="Genomic_DNA"/>
</dbReference>
<dbReference type="EMBL" id="CP002686">
    <property type="protein sequence ID" value="AEE77743.1"/>
    <property type="molecule type" value="Genomic_DNA"/>
</dbReference>
<dbReference type="PIR" id="T47322">
    <property type="entry name" value="T47322"/>
</dbReference>
<dbReference type="RefSeq" id="NP_189850.1">
    <property type="nucleotide sequence ID" value="NM_114131.3"/>
</dbReference>
<dbReference type="SMR" id="Q9M2A0"/>
<dbReference type="BioGRID" id="8606">
    <property type="interactions" value="20"/>
</dbReference>
<dbReference type="FunCoup" id="Q9M2A0">
    <property type="interactions" value="180"/>
</dbReference>
<dbReference type="IntAct" id="Q9M2A0">
    <property type="interactions" value="19"/>
</dbReference>
<dbReference type="STRING" id="3702.Q9M2A0"/>
<dbReference type="iPTMnet" id="Q9M2A0"/>
<dbReference type="PaxDb" id="3702-AT3G42640.1"/>
<dbReference type="ProteomicsDB" id="234783"/>
<dbReference type="EnsemblPlants" id="AT3G42640.1">
    <property type="protein sequence ID" value="AT3G42640.1"/>
    <property type="gene ID" value="AT3G42640"/>
</dbReference>
<dbReference type="GeneID" id="823281"/>
<dbReference type="Gramene" id="AT3G42640.1">
    <property type="protein sequence ID" value="AT3G42640.1"/>
    <property type="gene ID" value="AT3G42640"/>
</dbReference>
<dbReference type="KEGG" id="ath:AT3G42640"/>
<dbReference type="Araport" id="AT3G42640"/>
<dbReference type="TAIR" id="AT3G42640">
    <property type="gene designation" value="HA8"/>
</dbReference>
<dbReference type="eggNOG" id="KOG0205">
    <property type="taxonomic scope" value="Eukaryota"/>
</dbReference>
<dbReference type="HOGENOM" id="CLU_002360_6_4_1"/>
<dbReference type="InParanoid" id="Q9M2A0"/>
<dbReference type="OMA" id="KKECAGG"/>
<dbReference type="PhylomeDB" id="Q9M2A0"/>
<dbReference type="BioCyc" id="ARA:AT3G42640-MONOMER"/>
<dbReference type="PRO" id="PR:Q9M2A0"/>
<dbReference type="Proteomes" id="UP000006548">
    <property type="component" value="Chromosome 3"/>
</dbReference>
<dbReference type="ExpressionAtlas" id="Q9M2A0">
    <property type="expression patterns" value="baseline and differential"/>
</dbReference>
<dbReference type="GO" id="GO:0005886">
    <property type="term" value="C:plasma membrane"/>
    <property type="evidence" value="ECO:0007005"/>
    <property type="project" value="TAIR"/>
</dbReference>
<dbReference type="GO" id="GO:0005524">
    <property type="term" value="F:ATP binding"/>
    <property type="evidence" value="ECO:0007669"/>
    <property type="project" value="UniProtKB-KW"/>
</dbReference>
<dbReference type="GO" id="GO:0016887">
    <property type="term" value="F:ATP hydrolysis activity"/>
    <property type="evidence" value="ECO:0007669"/>
    <property type="project" value="InterPro"/>
</dbReference>
<dbReference type="GO" id="GO:0046872">
    <property type="term" value="F:metal ion binding"/>
    <property type="evidence" value="ECO:0007669"/>
    <property type="project" value="UniProtKB-KW"/>
</dbReference>
<dbReference type="GO" id="GO:0008553">
    <property type="term" value="F:P-type proton-exporting transporter activity"/>
    <property type="evidence" value="ECO:0007669"/>
    <property type="project" value="UniProtKB-EC"/>
</dbReference>
<dbReference type="GO" id="GO:0120029">
    <property type="term" value="P:proton export across plasma membrane"/>
    <property type="evidence" value="ECO:0007669"/>
    <property type="project" value="InterPro"/>
</dbReference>
<dbReference type="CDD" id="cd02076">
    <property type="entry name" value="P-type_ATPase_H"/>
    <property type="match status" value="1"/>
</dbReference>
<dbReference type="FunFam" id="1.20.1110.10:FF:000045">
    <property type="entry name" value="ATPase 4 plasma membrane-type"/>
    <property type="match status" value="1"/>
</dbReference>
<dbReference type="FunFam" id="2.70.150.10:FF:000004">
    <property type="entry name" value="Plasma membrane ATPase"/>
    <property type="match status" value="1"/>
</dbReference>
<dbReference type="FunFam" id="3.40.1110.10:FF:000004">
    <property type="entry name" value="Plasma membrane ATPase"/>
    <property type="match status" value="1"/>
</dbReference>
<dbReference type="FunFam" id="3.40.50.1000:FF:000211">
    <property type="entry name" value="Plasma membrane ATPase"/>
    <property type="match status" value="1"/>
</dbReference>
<dbReference type="Gene3D" id="6.10.140.890">
    <property type="match status" value="1"/>
</dbReference>
<dbReference type="Gene3D" id="3.40.1110.10">
    <property type="entry name" value="Calcium-transporting ATPase, cytoplasmic domain N"/>
    <property type="match status" value="1"/>
</dbReference>
<dbReference type="Gene3D" id="2.70.150.10">
    <property type="entry name" value="Calcium-transporting ATPase, cytoplasmic transduction domain A"/>
    <property type="match status" value="1"/>
</dbReference>
<dbReference type="Gene3D" id="1.20.1110.10">
    <property type="entry name" value="Calcium-transporting ATPase, transmembrane domain"/>
    <property type="match status" value="1"/>
</dbReference>
<dbReference type="Gene3D" id="3.40.50.1000">
    <property type="entry name" value="HAD superfamily/HAD-like"/>
    <property type="match status" value="1"/>
</dbReference>
<dbReference type="InterPro" id="IPR004014">
    <property type="entry name" value="ATPase_P-typ_cation-transptr_N"/>
</dbReference>
<dbReference type="InterPro" id="IPR023299">
    <property type="entry name" value="ATPase_P-typ_cyto_dom_N"/>
</dbReference>
<dbReference type="InterPro" id="IPR018303">
    <property type="entry name" value="ATPase_P-typ_P_site"/>
</dbReference>
<dbReference type="InterPro" id="IPR023298">
    <property type="entry name" value="ATPase_P-typ_TM_dom_sf"/>
</dbReference>
<dbReference type="InterPro" id="IPR008250">
    <property type="entry name" value="ATPase_P-typ_transduc_dom_A_sf"/>
</dbReference>
<dbReference type="InterPro" id="IPR036412">
    <property type="entry name" value="HAD-like_sf"/>
</dbReference>
<dbReference type="InterPro" id="IPR023214">
    <property type="entry name" value="HAD_sf"/>
</dbReference>
<dbReference type="InterPro" id="IPR006534">
    <property type="entry name" value="P-type_ATPase_IIIA"/>
</dbReference>
<dbReference type="InterPro" id="IPR001757">
    <property type="entry name" value="P_typ_ATPase"/>
</dbReference>
<dbReference type="InterPro" id="IPR044492">
    <property type="entry name" value="P_typ_ATPase_HD_dom"/>
</dbReference>
<dbReference type="NCBIfam" id="TIGR01647">
    <property type="entry name" value="ATPase-IIIA_H"/>
    <property type="match status" value="1"/>
</dbReference>
<dbReference type="NCBIfam" id="TIGR01494">
    <property type="entry name" value="ATPase_P-type"/>
    <property type="match status" value="2"/>
</dbReference>
<dbReference type="PANTHER" id="PTHR42861">
    <property type="entry name" value="CALCIUM-TRANSPORTING ATPASE"/>
    <property type="match status" value="1"/>
</dbReference>
<dbReference type="Pfam" id="PF00690">
    <property type="entry name" value="Cation_ATPase_N"/>
    <property type="match status" value="1"/>
</dbReference>
<dbReference type="Pfam" id="PF00122">
    <property type="entry name" value="E1-E2_ATPase"/>
    <property type="match status" value="1"/>
</dbReference>
<dbReference type="Pfam" id="PF00702">
    <property type="entry name" value="Hydrolase"/>
    <property type="match status" value="1"/>
</dbReference>
<dbReference type="PRINTS" id="PR00119">
    <property type="entry name" value="CATATPASE"/>
</dbReference>
<dbReference type="PRINTS" id="PR00120">
    <property type="entry name" value="HATPASE"/>
</dbReference>
<dbReference type="SFLD" id="SFLDG00002">
    <property type="entry name" value="C1.7:_P-type_atpase_like"/>
    <property type="match status" value="1"/>
</dbReference>
<dbReference type="SFLD" id="SFLDF00027">
    <property type="entry name" value="p-type_atpase"/>
    <property type="match status" value="1"/>
</dbReference>
<dbReference type="SMART" id="SM00831">
    <property type="entry name" value="Cation_ATPase_N"/>
    <property type="match status" value="1"/>
</dbReference>
<dbReference type="SUPFAM" id="SSF81653">
    <property type="entry name" value="Calcium ATPase, transduction domain A"/>
    <property type="match status" value="1"/>
</dbReference>
<dbReference type="SUPFAM" id="SSF81665">
    <property type="entry name" value="Calcium ATPase, transmembrane domain M"/>
    <property type="match status" value="1"/>
</dbReference>
<dbReference type="SUPFAM" id="SSF56784">
    <property type="entry name" value="HAD-like"/>
    <property type="match status" value="1"/>
</dbReference>
<dbReference type="PROSITE" id="PS00154">
    <property type="entry name" value="ATPASE_E1_E2"/>
    <property type="match status" value="1"/>
</dbReference>
<sequence>MATEFSWDEIKKENVDLERIPVEEVFEQLKCSKEGLSSDEGAKRLEIFGANKLEEKSENKFLKFLGFMWNPLSWVMESAAIMAIVLANGGGKAPDWQDFIGIMVLLIINSTISFIEENNAGNAAAALMANLAPKTKVLRDGKWGEQEASILVPGDLISIKLGDIVPADARLLEGDPLKIDQSALTGESLPTTKHPGDEVFSGSTCKQGEIEAVVIATGVHTFFGKAAHLVDSTNNVGHFQKVLTSIGNFCICSIGLGMLIEILIMYPIQHRTYRDGIDNLLVLLIGGIPIAMPTVLSVTMAIGSHRLSQQGAITKRMTAIEEMAGMDVLCSDKTGTLTLNKLSVDKSLIEVFPKNMDSDSVVLMAARASRIENQDAIDASIVGMLGDPKEARAGITEVHFLPFNPVDKRTAITYIDESGDWHRSSKGAPEQIIELCNLQGETKRKAHEVIDGFAERGLRSLGVAQQTVPEKTKESDGSPWEFVGLLPLFDPPRHDSAETIRRALELGVNVKMITGDQLAIGIETGRRLGMGTNMYPSTSLLGNSKDESLVGIPIDELIEKADGFAGVFPEHKYEIVKKLQERKHICGMTGDGVNDAPALKKADIGIAVADATDAARSASDIVLTEPGLSVIISAVLTSRAIFQRMKNYTIYAVSITIRIVLGFMLVALIWRFDFAPFMVLIIAILNDGTIMTISKDRVKPSPVPDSWKLNEIFATGVVLGTYMALTTVLFFWLAHDTDFFSKTFGVRSIQGNEEELMAALYLQVSIISQALIFVTRSRSWSFVERPGFLLLIAFVIAQLVATLIAVYANWGFARIVGCGWGWAGGIWVYSIITYIPLDILKFIIRYALTGKAWDNMINQKTAFTTKKDYGKGEREAQWALAQRTLHGLPPPEAMFNDNKNELSEIAEQAKRRAEVARLRELHTLKGHVESVVKLKGLDIDTIQQHYTV</sequence>
<feature type="chain" id="PRO_0000046281" description="ATPase 8, plasma membrane-type">
    <location>
        <begin position="1"/>
        <end position="948"/>
    </location>
</feature>
<feature type="topological domain" description="Cytoplasmic" evidence="4">
    <location>
        <begin position="1"/>
        <end position="64"/>
    </location>
</feature>
<feature type="transmembrane region" description="Helical; Name=1" evidence="4">
    <location>
        <begin position="65"/>
        <end position="84"/>
    </location>
</feature>
<feature type="topological domain" description="Extracellular" evidence="4">
    <location>
        <begin position="85"/>
        <end position="96"/>
    </location>
</feature>
<feature type="transmembrane region" description="Helical; Name=2" evidence="4">
    <location>
        <begin position="97"/>
        <end position="117"/>
    </location>
</feature>
<feature type="topological domain" description="Cytoplasmic" evidence="4">
    <location>
        <begin position="118"/>
        <end position="246"/>
    </location>
</feature>
<feature type="transmembrane region" description="Helical; Name=3" evidence="4">
    <location>
        <begin position="247"/>
        <end position="267"/>
    </location>
</feature>
<feature type="topological domain" description="Extracellular" evidence="4">
    <location>
        <begin position="268"/>
        <end position="276"/>
    </location>
</feature>
<feature type="transmembrane region" description="Helical; Name=4" evidence="4">
    <location>
        <begin position="277"/>
        <end position="294"/>
    </location>
</feature>
<feature type="topological domain" description="Cytoplasmic" evidence="4">
    <location>
        <begin position="295"/>
        <end position="646"/>
    </location>
</feature>
<feature type="transmembrane region" description="Helical; Name=5" evidence="4">
    <location>
        <begin position="647"/>
        <end position="668"/>
    </location>
</feature>
<feature type="topological domain" description="Extracellular" evidence="4">
    <location>
        <begin position="669"/>
        <end position="673"/>
    </location>
</feature>
<feature type="transmembrane region" description="Helical; Name=6" evidence="4">
    <location>
        <begin position="674"/>
        <end position="696"/>
    </location>
</feature>
<feature type="topological domain" description="Cytoplasmic" evidence="4">
    <location>
        <begin position="697"/>
        <end position="712"/>
    </location>
</feature>
<feature type="transmembrane region" description="Helical; Name=7" evidence="4">
    <location>
        <begin position="713"/>
        <end position="733"/>
    </location>
</feature>
<feature type="topological domain" description="Extracellular" evidence="4">
    <location>
        <begin position="734"/>
        <end position="754"/>
    </location>
</feature>
<feature type="transmembrane region" description="Helical; Name=8" evidence="4">
    <location>
        <begin position="755"/>
        <end position="775"/>
    </location>
</feature>
<feature type="topological domain" description="Cytoplasmic" evidence="4">
    <location>
        <begin position="776"/>
        <end position="787"/>
    </location>
</feature>
<feature type="transmembrane region" description="Helical; Name=9" evidence="4">
    <location>
        <begin position="788"/>
        <end position="808"/>
    </location>
</feature>
<feature type="topological domain" description="Extracellular" evidence="4">
    <location>
        <begin position="809"/>
        <end position="816"/>
    </location>
</feature>
<feature type="transmembrane region" description="Helical; Name=10" evidence="4">
    <location>
        <begin position="817"/>
        <end position="837"/>
    </location>
</feature>
<feature type="topological domain" description="Cytoplasmic" evidence="4">
    <location>
        <begin position="838"/>
        <end position="948"/>
    </location>
</feature>
<feature type="region of interest" description="Interaction with 14-3-3 proteins" evidence="1">
    <location>
        <begin position="946"/>
        <end position="948"/>
    </location>
</feature>
<feature type="active site" description="4-aspartylphosphate intermediate" evidence="1">
    <location>
        <position position="332"/>
    </location>
</feature>
<feature type="binding site" evidence="1">
    <location>
        <position position="591"/>
    </location>
    <ligand>
        <name>Mg(2+)</name>
        <dbReference type="ChEBI" id="CHEBI:18420"/>
    </ligand>
</feature>
<feature type="binding site" evidence="1">
    <location>
        <position position="595"/>
    </location>
    <ligand>
        <name>Mg(2+)</name>
        <dbReference type="ChEBI" id="CHEBI:18420"/>
    </ligand>
</feature>
<feature type="modified residue" description="Phosphothreonine" evidence="3">
    <location>
        <position position="884"/>
    </location>
</feature>
<feature type="modified residue" description="Phosphoserine" evidence="2">
    <location>
        <position position="930"/>
    </location>
</feature>
<feature type="modified residue" description="Phosphothreonine" evidence="3">
    <location>
        <position position="947"/>
    </location>
</feature>
<evidence type="ECO:0000250" key="1"/>
<evidence type="ECO:0000250" key="2">
    <source>
        <dbReference type="UniProtKB" id="P19456"/>
    </source>
</evidence>
<evidence type="ECO:0000250" key="3">
    <source>
        <dbReference type="UniProtKB" id="P20649"/>
    </source>
</evidence>
<evidence type="ECO:0000255" key="4"/>
<evidence type="ECO:0000269" key="5">
    <source>
    </source>
</evidence>
<evidence type="ECO:0000305" key="6"/>
<gene>
    <name type="primary">AHA8</name>
    <name type="ordered locus">At3g42640</name>
    <name type="ORF">T12K4_90</name>
</gene>
<name>PMA8_ARATH</name>
<keyword id="KW-0067">ATP-binding</keyword>
<keyword id="KW-0375">Hydrogen ion transport</keyword>
<keyword id="KW-0406">Ion transport</keyword>
<keyword id="KW-0460">Magnesium</keyword>
<keyword id="KW-0472">Membrane</keyword>
<keyword id="KW-0479">Metal-binding</keyword>
<keyword id="KW-0547">Nucleotide-binding</keyword>
<keyword id="KW-0597">Phosphoprotein</keyword>
<keyword id="KW-1185">Reference proteome</keyword>
<keyword id="KW-1278">Translocase</keyword>
<keyword id="KW-0812">Transmembrane</keyword>
<keyword id="KW-1133">Transmembrane helix</keyword>
<keyword id="KW-0813">Transport</keyword>
<comment type="function">
    <text evidence="1">The plasma membrane H(+) ATPase of plants and fungi generates a proton gradient that drives the active transport of nutrients by H(+)-symport. The resulting external acidification and/or internal alkinization may mediate growth responses (By similarity).</text>
</comment>
<comment type="catalytic activity">
    <reaction>
        <text>ATP + H2O + H(+)(in) = ADP + phosphate + 2 H(+)(out)</text>
        <dbReference type="Rhea" id="RHEA:20852"/>
        <dbReference type="ChEBI" id="CHEBI:15377"/>
        <dbReference type="ChEBI" id="CHEBI:15378"/>
        <dbReference type="ChEBI" id="CHEBI:30616"/>
        <dbReference type="ChEBI" id="CHEBI:43474"/>
        <dbReference type="ChEBI" id="CHEBI:456216"/>
        <dbReference type="EC" id="7.1.2.1"/>
    </reaction>
</comment>
<comment type="subunit">
    <text evidence="1">Binds to 14-3-3 proteins. The binding is induced by phosphorylation of Thr-947. Binding to 14-3-3 proteins activates the H(+)-ATPase (By similarity).</text>
</comment>
<comment type="subcellular location">
    <subcellularLocation>
        <location>Membrane</location>
        <topology>Multi-pass membrane protein</topology>
    </subcellularLocation>
</comment>
<comment type="tissue specificity">
    <text evidence="5">Expressed in guard cells, roots and leaves, and barely in mesophyll cells.</text>
</comment>
<comment type="similarity">
    <text evidence="6">Belongs to the cation transport ATPase (P-type) (TC 3.A.3) family. Type IIIA subfamily.</text>
</comment>
<accession>Q9M2A0</accession>
<proteinExistence type="evidence at transcript level"/>
<organism>
    <name type="scientific">Arabidopsis thaliana</name>
    <name type="common">Mouse-ear cress</name>
    <dbReference type="NCBI Taxonomy" id="3702"/>
    <lineage>
        <taxon>Eukaryota</taxon>
        <taxon>Viridiplantae</taxon>
        <taxon>Streptophyta</taxon>
        <taxon>Embryophyta</taxon>
        <taxon>Tracheophyta</taxon>
        <taxon>Spermatophyta</taxon>
        <taxon>Magnoliopsida</taxon>
        <taxon>eudicotyledons</taxon>
        <taxon>Gunneridae</taxon>
        <taxon>Pentapetalae</taxon>
        <taxon>rosids</taxon>
        <taxon>malvids</taxon>
        <taxon>Brassicales</taxon>
        <taxon>Brassicaceae</taxon>
        <taxon>Camelineae</taxon>
        <taxon>Arabidopsis</taxon>
    </lineage>
</organism>
<reference key="1">
    <citation type="journal article" date="2000" name="Nature">
        <title>Sequence and analysis of chromosome 3 of the plant Arabidopsis thaliana.</title>
        <authorList>
            <person name="Salanoubat M."/>
            <person name="Lemcke K."/>
            <person name="Rieger M."/>
            <person name="Ansorge W."/>
            <person name="Unseld M."/>
            <person name="Fartmann B."/>
            <person name="Valle G."/>
            <person name="Bloecker H."/>
            <person name="Perez-Alonso M."/>
            <person name="Obermaier B."/>
            <person name="Delseny M."/>
            <person name="Boutry M."/>
            <person name="Grivell L.A."/>
            <person name="Mache R."/>
            <person name="Puigdomenech P."/>
            <person name="De Simone V."/>
            <person name="Choisne N."/>
            <person name="Artiguenave F."/>
            <person name="Robert C."/>
            <person name="Brottier P."/>
            <person name="Wincker P."/>
            <person name="Cattolico L."/>
            <person name="Weissenbach J."/>
            <person name="Saurin W."/>
            <person name="Quetier F."/>
            <person name="Schaefer M."/>
            <person name="Mueller-Auer S."/>
            <person name="Gabel C."/>
            <person name="Fuchs M."/>
            <person name="Benes V."/>
            <person name="Wurmbach E."/>
            <person name="Drzonek H."/>
            <person name="Erfle H."/>
            <person name="Jordan N."/>
            <person name="Bangert S."/>
            <person name="Wiedelmann R."/>
            <person name="Kranz H."/>
            <person name="Voss H."/>
            <person name="Holland R."/>
            <person name="Brandt P."/>
            <person name="Nyakatura G."/>
            <person name="Vezzi A."/>
            <person name="D'Angelo M."/>
            <person name="Pallavicini A."/>
            <person name="Toppo S."/>
            <person name="Simionati B."/>
            <person name="Conrad A."/>
            <person name="Hornischer K."/>
            <person name="Kauer G."/>
            <person name="Loehnert T.-H."/>
            <person name="Nordsiek G."/>
            <person name="Reichelt J."/>
            <person name="Scharfe M."/>
            <person name="Schoen O."/>
            <person name="Bargues M."/>
            <person name="Terol J."/>
            <person name="Climent J."/>
            <person name="Navarro P."/>
            <person name="Collado C."/>
            <person name="Perez-Perez A."/>
            <person name="Ottenwaelder B."/>
            <person name="Duchemin D."/>
            <person name="Cooke R."/>
            <person name="Laudie M."/>
            <person name="Berger-Llauro C."/>
            <person name="Purnelle B."/>
            <person name="Masuy D."/>
            <person name="de Haan M."/>
            <person name="Maarse A.C."/>
            <person name="Alcaraz J.-P."/>
            <person name="Cottet A."/>
            <person name="Casacuberta E."/>
            <person name="Monfort A."/>
            <person name="Argiriou A."/>
            <person name="Flores M."/>
            <person name="Liguori R."/>
            <person name="Vitale D."/>
            <person name="Mannhaupt G."/>
            <person name="Haase D."/>
            <person name="Schoof H."/>
            <person name="Rudd S."/>
            <person name="Zaccaria P."/>
            <person name="Mewes H.-W."/>
            <person name="Mayer K.F.X."/>
            <person name="Kaul S."/>
            <person name="Town C.D."/>
            <person name="Koo H.L."/>
            <person name="Tallon L.J."/>
            <person name="Jenkins J."/>
            <person name="Rooney T."/>
            <person name="Rizzo M."/>
            <person name="Walts A."/>
            <person name="Utterback T."/>
            <person name="Fujii C.Y."/>
            <person name="Shea T.P."/>
            <person name="Creasy T.H."/>
            <person name="Haas B."/>
            <person name="Maiti R."/>
            <person name="Wu D."/>
            <person name="Peterson J."/>
            <person name="Van Aken S."/>
            <person name="Pai G."/>
            <person name="Militscher J."/>
            <person name="Sellers P."/>
            <person name="Gill J.E."/>
            <person name="Feldblyum T.V."/>
            <person name="Preuss D."/>
            <person name="Lin X."/>
            <person name="Nierman W.C."/>
            <person name="Salzberg S.L."/>
            <person name="White O."/>
            <person name="Venter J.C."/>
            <person name="Fraser C.M."/>
            <person name="Kaneko T."/>
            <person name="Nakamura Y."/>
            <person name="Sato S."/>
            <person name="Kato T."/>
            <person name="Asamizu E."/>
            <person name="Sasamoto S."/>
            <person name="Kimura T."/>
            <person name="Idesawa K."/>
            <person name="Kawashima K."/>
            <person name="Kishida Y."/>
            <person name="Kiyokawa C."/>
            <person name="Kohara M."/>
            <person name="Matsumoto M."/>
            <person name="Matsuno A."/>
            <person name="Muraki A."/>
            <person name="Nakayama S."/>
            <person name="Nakazaki N."/>
            <person name="Shinpo S."/>
            <person name="Takeuchi C."/>
            <person name="Wada T."/>
            <person name="Watanabe A."/>
            <person name="Yamada M."/>
            <person name="Yasuda M."/>
            <person name="Tabata S."/>
        </authorList>
    </citation>
    <scope>NUCLEOTIDE SEQUENCE [LARGE SCALE GENOMIC DNA]</scope>
    <source>
        <strain>cv. Columbia</strain>
    </source>
</reference>
<reference key="2">
    <citation type="journal article" date="2017" name="Plant J.">
        <title>Araport11: a complete reannotation of the Arabidopsis thaliana reference genome.</title>
        <authorList>
            <person name="Cheng C.Y."/>
            <person name="Krishnakumar V."/>
            <person name="Chan A.P."/>
            <person name="Thibaud-Nissen F."/>
            <person name="Schobel S."/>
            <person name="Town C.D."/>
        </authorList>
    </citation>
    <scope>GENOME REANNOTATION</scope>
    <source>
        <strain>cv. Columbia</strain>
    </source>
</reference>
<reference key="3">
    <citation type="journal article" date="2005" name="Plant Cell Physiol.">
        <title>Biochemical characterization of plasma membrane H+-ATPase activation in guard cell protoplasts of Arabidopsis thaliana in response to blue light.</title>
        <authorList>
            <person name="Ueno K."/>
            <person name="Kinoshita T."/>
            <person name="Inoue S."/>
            <person name="Emi T."/>
            <person name="Shimazaki K."/>
        </authorList>
    </citation>
    <scope>TISSUE SPECIFICITY</scope>
    <source>
        <strain>cv. Columbia GL1</strain>
    </source>
</reference>
<protein>
    <recommendedName>
        <fullName>ATPase 8, plasma membrane-type</fullName>
        <ecNumber>7.1.2.1</ecNumber>
    </recommendedName>
    <alternativeName>
        <fullName>Proton pump 8</fullName>
    </alternativeName>
</protein>